<organism>
    <name type="scientific">Gnetum parvifolium</name>
    <name type="common">Small-leaved jointfir</name>
    <name type="synonym">Gnetum scandens var. parvifolium</name>
    <dbReference type="NCBI Taxonomy" id="33153"/>
    <lineage>
        <taxon>Eukaryota</taxon>
        <taxon>Viridiplantae</taxon>
        <taxon>Streptophyta</taxon>
        <taxon>Embryophyta</taxon>
        <taxon>Tracheophyta</taxon>
        <taxon>Spermatophyta</taxon>
        <taxon>Gnetopsida</taxon>
        <taxon>Gnetidae</taxon>
        <taxon>Gnetales</taxon>
        <taxon>Gnetaceae</taxon>
        <taxon>Gnetum</taxon>
    </lineage>
</organism>
<comment type="function">
    <text evidence="1">One of the components of the core complex of photosystem II (PSII). It binds chlorophyll and helps catalyze the primary light-induced photochemical processes of PSII. PSII is a light-driven water:plastoquinone oxidoreductase, using light energy to abstract electrons from H(2)O, generating O(2) and a proton gradient subsequently used for ATP formation.</text>
</comment>
<comment type="cofactor">
    <text evidence="1">Binds multiple chlorophylls. PSII binds additional chlorophylls, carotenoids and specific lipids.</text>
</comment>
<comment type="subunit">
    <text evidence="1">PSII is composed of 1 copy each of membrane proteins PsbA, PsbB, PsbC, PsbD, PsbE, PsbF, PsbH, PsbI, PsbJ, PsbK, PsbL, PsbM, PsbT, PsbX, PsbY, PsbZ, Psb30/Ycf12, at least 3 peripheral proteins of the oxygen-evolving complex and a large number of cofactors. It forms dimeric complexes.</text>
</comment>
<comment type="subcellular location">
    <subcellularLocation>
        <location evidence="1">Plastid</location>
        <location evidence="1">Chloroplast thylakoid membrane</location>
        <topology evidence="1">Multi-pass membrane protein</topology>
    </subcellularLocation>
</comment>
<comment type="similarity">
    <text evidence="1">Belongs to the PsbB/PsbC family. PsbB subfamily.</text>
</comment>
<accession>A6BM29</accession>
<accession>B7ZI89</accession>
<reference key="1">
    <citation type="journal article" date="2007" name="Mol. Biol. Evol.">
        <title>Chloroplast genome (cpDNA) of Cycas taitungensis and 56 cp protein-coding genes of Gnetum parvifolium: insights into cpDNA evolution and phylogeny of extant seed plants.</title>
        <authorList>
            <person name="Wu C.-S."/>
            <person name="Wang Y.-N."/>
            <person name="Liu S.-M."/>
            <person name="Chaw S.-M."/>
        </authorList>
    </citation>
    <scope>NUCLEOTIDE SEQUENCE [LARGE SCALE GENOMIC DNA]</scope>
</reference>
<reference key="2">
    <citation type="journal article" date="2009" name="Mol. Phylogenet. Evol.">
        <title>Evolution of reduced and compact chloroplast genomes (cpDNAs) in gnetophytes: Selection toward a lower-cost strategy.</title>
        <authorList>
            <person name="Wu C.-S."/>
            <person name="Lai Y.-T."/>
            <person name="Lin C.-P."/>
            <person name="Wang Y.-N."/>
            <person name="Chaw S.-M."/>
        </authorList>
    </citation>
    <scope>NUCLEOTIDE SEQUENCE [LARGE SCALE GENOMIC DNA]</scope>
</reference>
<name>PSBB_GNEPA</name>
<gene>
    <name evidence="1" type="primary">psbB</name>
</gene>
<dbReference type="EMBL" id="AB295925">
    <property type="protein sequence ID" value="BAF64874.1"/>
    <property type="molecule type" value="Genomic_DNA"/>
</dbReference>
<dbReference type="EMBL" id="AP009569">
    <property type="protein sequence ID" value="BAH11269.1"/>
    <property type="molecule type" value="Genomic_DNA"/>
</dbReference>
<dbReference type="RefSeq" id="YP_002519759.1">
    <property type="nucleotide sequence ID" value="NC_011942.1"/>
</dbReference>
<dbReference type="SMR" id="A6BM29"/>
<dbReference type="GeneID" id="7368166"/>
<dbReference type="GO" id="GO:0009535">
    <property type="term" value="C:chloroplast thylakoid membrane"/>
    <property type="evidence" value="ECO:0007669"/>
    <property type="project" value="UniProtKB-SubCell"/>
</dbReference>
<dbReference type="GO" id="GO:0009523">
    <property type="term" value="C:photosystem II"/>
    <property type="evidence" value="ECO:0007669"/>
    <property type="project" value="UniProtKB-KW"/>
</dbReference>
<dbReference type="GO" id="GO:0016168">
    <property type="term" value="F:chlorophyll binding"/>
    <property type="evidence" value="ECO:0007669"/>
    <property type="project" value="UniProtKB-UniRule"/>
</dbReference>
<dbReference type="GO" id="GO:0045156">
    <property type="term" value="F:electron transporter, transferring electrons within the cyclic electron transport pathway of photosynthesis activity"/>
    <property type="evidence" value="ECO:0007669"/>
    <property type="project" value="InterPro"/>
</dbReference>
<dbReference type="GO" id="GO:0009772">
    <property type="term" value="P:photosynthetic electron transport in photosystem II"/>
    <property type="evidence" value="ECO:0007669"/>
    <property type="project" value="InterPro"/>
</dbReference>
<dbReference type="FunFam" id="3.10.680.10:FF:000001">
    <property type="entry name" value="Photosystem II CP47 reaction center protein"/>
    <property type="match status" value="1"/>
</dbReference>
<dbReference type="Gene3D" id="3.10.680.10">
    <property type="entry name" value="Photosystem II CP47 reaction center protein"/>
    <property type="match status" value="1"/>
</dbReference>
<dbReference type="HAMAP" id="MF_01495">
    <property type="entry name" value="PSII_PsbB_CP47"/>
    <property type="match status" value="1"/>
</dbReference>
<dbReference type="InterPro" id="IPR000932">
    <property type="entry name" value="PS_antenna-like"/>
</dbReference>
<dbReference type="InterPro" id="IPR036001">
    <property type="entry name" value="PS_II_antenna-like_sf"/>
</dbReference>
<dbReference type="InterPro" id="IPR017486">
    <property type="entry name" value="PSII_PsbB"/>
</dbReference>
<dbReference type="NCBIfam" id="TIGR03039">
    <property type="entry name" value="PS_II_CP47"/>
    <property type="match status" value="1"/>
</dbReference>
<dbReference type="PANTHER" id="PTHR33180">
    <property type="entry name" value="PHOTOSYSTEM II CP43 REACTION CENTER PROTEIN"/>
    <property type="match status" value="1"/>
</dbReference>
<dbReference type="PANTHER" id="PTHR33180:SF37">
    <property type="entry name" value="PHOTOSYSTEM II CP43 REACTION CENTER PROTEIN"/>
    <property type="match status" value="1"/>
</dbReference>
<dbReference type="Pfam" id="PF00421">
    <property type="entry name" value="PSII"/>
    <property type="match status" value="1"/>
</dbReference>
<dbReference type="SUPFAM" id="SSF161077">
    <property type="entry name" value="Photosystem II antenna protein-like"/>
    <property type="match status" value="1"/>
</dbReference>
<keyword id="KW-0148">Chlorophyll</keyword>
<keyword id="KW-0150">Chloroplast</keyword>
<keyword id="KW-0157">Chromophore</keyword>
<keyword id="KW-0472">Membrane</keyword>
<keyword id="KW-0602">Photosynthesis</keyword>
<keyword id="KW-0604">Photosystem II</keyword>
<keyword id="KW-0934">Plastid</keyword>
<keyword id="KW-0793">Thylakoid</keyword>
<keyword id="KW-0812">Transmembrane</keyword>
<keyword id="KW-1133">Transmembrane helix</keyword>
<protein>
    <recommendedName>
        <fullName evidence="1">Photosystem II CP47 reaction center protein</fullName>
    </recommendedName>
    <alternativeName>
        <fullName evidence="1">PSII 47 kDa protein</fullName>
    </alternativeName>
    <alternativeName>
        <fullName evidence="1">Protein CP-47</fullName>
    </alternativeName>
</protein>
<evidence type="ECO:0000255" key="1">
    <source>
        <dbReference type="HAMAP-Rule" id="MF_01495"/>
    </source>
</evidence>
<sequence>MGLPWYRVHTVVLNDPGRLIAVHIMHTALVAGWAGSMALYELAVFDPSDPVLDPMWRQGMFILPFMTRLGIKESWGGWSITGESAVNPGLWSYEGVAGAHIVFSGLCFLSAIWHWVYWDLEIFSDPRTGKPSLDLPKIFGIHLFLSGVACFGFGAFHVTGLYGPGIWVSDPFGLTGRIQPVSPAWGAEGFDPFVPGGIASHHIAAGLLGIIAGLFHLSVRPPQRLYRGLRMGNIETVLSSSIAAVFFAAFIVAGTMWYGSATTPIELFGPTRYQWDQGYFQQEIDRRVRAGLTEKLSLSEAWSRIPEKLAFYDYIGNNPAKGGLFRAGAMDNGDGIAVGWLGHPIFRDKEGNELFVRRMPTFFETFPVVLVNKEGIVKADVPFRRSESKYSVEQVGVTVEFYGGELNGVSFSDPAIVKKYARRAQLGEIFELDRATLKSDGVFRSSPRGWFTFGHATFALLFFFGHIWHGARTLFRDIFAGIDPELDAQVEFGAFQKLGDPTTKRQVV</sequence>
<feature type="chain" id="PRO_0000359824" description="Photosystem II CP47 reaction center protein">
    <location>
        <begin position="1"/>
        <end position="508"/>
    </location>
</feature>
<feature type="transmembrane region" description="Helical" evidence="1">
    <location>
        <begin position="21"/>
        <end position="36"/>
    </location>
</feature>
<feature type="transmembrane region" description="Helical" evidence="1">
    <location>
        <begin position="101"/>
        <end position="115"/>
    </location>
</feature>
<feature type="transmembrane region" description="Helical" evidence="1">
    <location>
        <begin position="140"/>
        <end position="156"/>
    </location>
</feature>
<feature type="transmembrane region" description="Helical" evidence="1">
    <location>
        <begin position="203"/>
        <end position="218"/>
    </location>
</feature>
<feature type="transmembrane region" description="Helical" evidence="1">
    <location>
        <begin position="237"/>
        <end position="252"/>
    </location>
</feature>
<feature type="transmembrane region" description="Helical" evidence="1">
    <location>
        <begin position="457"/>
        <end position="472"/>
    </location>
</feature>
<geneLocation type="chloroplast"/>
<proteinExistence type="inferred from homology"/>